<accession>A8ESC9</accession>
<gene>
    <name type="ordered locus">Abu_0586</name>
</gene>
<comment type="function">
    <text evidence="1">Pyrophosphatase that catalyzes the hydrolysis of nucleoside triphosphates to their monophosphate derivatives, with a high preference for the non-canonical purine nucleotides XTP (xanthosine triphosphate), dITP (deoxyinosine triphosphate) and ITP. Seems to function as a house-cleaning enzyme that removes non-canonical purine nucleotides from the nucleotide pool, thus preventing their incorporation into DNA/RNA and avoiding chromosomal lesions.</text>
</comment>
<comment type="catalytic activity">
    <reaction evidence="1">
        <text>XTP + H2O = XMP + diphosphate + H(+)</text>
        <dbReference type="Rhea" id="RHEA:28610"/>
        <dbReference type="ChEBI" id="CHEBI:15377"/>
        <dbReference type="ChEBI" id="CHEBI:15378"/>
        <dbReference type="ChEBI" id="CHEBI:33019"/>
        <dbReference type="ChEBI" id="CHEBI:57464"/>
        <dbReference type="ChEBI" id="CHEBI:61314"/>
        <dbReference type="EC" id="3.6.1.66"/>
    </reaction>
</comment>
<comment type="catalytic activity">
    <reaction evidence="1">
        <text>dITP + H2O = dIMP + diphosphate + H(+)</text>
        <dbReference type="Rhea" id="RHEA:28342"/>
        <dbReference type="ChEBI" id="CHEBI:15377"/>
        <dbReference type="ChEBI" id="CHEBI:15378"/>
        <dbReference type="ChEBI" id="CHEBI:33019"/>
        <dbReference type="ChEBI" id="CHEBI:61194"/>
        <dbReference type="ChEBI" id="CHEBI:61382"/>
        <dbReference type="EC" id="3.6.1.66"/>
    </reaction>
</comment>
<comment type="catalytic activity">
    <reaction evidence="1">
        <text>ITP + H2O = IMP + diphosphate + H(+)</text>
        <dbReference type="Rhea" id="RHEA:29399"/>
        <dbReference type="ChEBI" id="CHEBI:15377"/>
        <dbReference type="ChEBI" id="CHEBI:15378"/>
        <dbReference type="ChEBI" id="CHEBI:33019"/>
        <dbReference type="ChEBI" id="CHEBI:58053"/>
        <dbReference type="ChEBI" id="CHEBI:61402"/>
        <dbReference type="EC" id="3.6.1.66"/>
    </reaction>
</comment>
<comment type="cofactor">
    <cofactor evidence="1">
        <name>Mg(2+)</name>
        <dbReference type="ChEBI" id="CHEBI:18420"/>
    </cofactor>
    <text evidence="1">Binds 1 Mg(2+) ion per subunit.</text>
</comment>
<comment type="subunit">
    <text evidence="1">Homodimer.</text>
</comment>
<comment type="similarity">
    <text evidence="1">Belongs to the HAM1 NTPase family.</text>
</comment>
<proteinExistence type="inferred from homology"/>
<protein>
    <recommendedName>
        <fullName evidence="1">dITP/XTP pyrophosphatase</fullName>
        <ecNumber evidence="1">3.6.1.66</ecNumber>
    </recommendedName>
    <alternativeName>
        <fullName evidence="1">Non-canonical purine NTP pyrophosphatase</fullName>
    </alternativeName>
    <alternativeName>
        <fullName evidence="1">Non-standard purine NTP pyrophosphatase</fullName>
    </alternativeName>
    <alternativeName>
        <fullName evidence="1">Nucleoside-triphosphate diphosphatase</fullName>
    </alternativeName>
    <alternativeName>
        <fullName evidence="1">Nucleoside-triphosphate pyrophosphatase</fullName>
        <shortName evidence="1">NTPase</shortName>
    </alternativeName>
</protein>
<name>IXTPA_ALIB4</name>
<sequence>MKIVLASANKGKIKEFERLLPNDEIVAFSEILGKIEIDEDKDTFKGNAIKKAQTIYDELQKINFGDVVVISDDSGISVPVLGNAPGVYSARYAGLNASDKENNEKLKAELNKLGLEKTPAFYTACIAIVYKNEVYTVHGWMYGEVLNKEIGTNGFGYDPMFIPNGYDKTLGELDEGVKKEFSHRSKALKLAMKVLEVIL</sequence>
<dbReference type="EC" id="3.6.1.66" evidence="1"/>
<dbReference type="EMBL" id="CP000361">
    <property type="protein sequence ID" value="ABV66853.1"/>
    <property type="molecule type" value="Genomic_DNA"/>
</dbReference>
<dbReference type="RefSeq" id="WP_012012372.1">
    <property type="nucleotide sequence ID" value="NC_009850.1"/>
</dbReference>
<dbReference type="SMR" id="A8ESC9"/>
<dbReference type="STRING" id="367737.Abu_0586"/>
<dbReference type="GeneID" id="24304045"/>
<dbReference type="KEGG" id="abu:Abu_0586"/>
<dbReference type="eggNOG" id="COG0127">
    <property type="taxonomic scope" value="Bacteria"/>
</dbReference>
<dbReference type="HOGENOM" id="CLU_082080_0_2_7"/>
<dbReference type="Proteomes" id="UP000001136">
    <property type="component" value="Chromosome"/>
</dbReference>
<dbReference type="GO" id="GO:0005829">
    <property type="term" value="C:cytosol"/>
    <property type="evidence" value="ECO:0007669"/>
    <property type="project" value="TreeGrafter"/>
</dbReference>
<dbReference type="GO" id="GO:0035870">
    <property type="term" value="F:dITP diphosphatase activity"/>
    <property type="evidence" value="ECO:0007669"/>
    <property type="project" value="RHEA"/>
</dbReference>
<dbReference type="GO" id="GO:0036220">
    <property type="term" value="F:ITP diphosphatase activity"/>
    <property type="evidence" value="ECO:0007669"/>
    <property type="project" value="UniProtKB-EC"/>
</dbReference>
<dbReference type="GO" id="GO:0046872">
    <property type="term" value="F:metal ion binding"/>
    <property type="evidence" value="ECO:0007669"/>
    <property type="project" value="UniProtKB-KW"/>
</dbReference>
<dbReference type="GO" id="GO:0000166">
    <property type="term" value="F:nucleotide binding"/>
    <property type="evidence" value="ECO:0007669"/>
    <property type="project" value="UniProtKB-KW"/>
</dbReference>
<dbReference type="GO" id="GO:0017111">
    <property type="term" value="F:ribonucleoside triphosphate phosphatase activity"/>
    <property type="evidence" value="ECO:0007669"/>
    <property type="project" value="InterPro"/>
</dbReference>
<dbReference type="GO" id="GO:0036222">
    <property type="term" value="F:XTP diphosphatase activity"/>
    <property type="evidence" value="ECO:0007669"/>
    <property type="project" value="RHEA"/>
</dbReference>
<dbReference type="GO" id="GO:0009117">
    <property type="term" value="P:nucleotide metabolic process"/>
    <property type="evidence" value="ECO:0007669"/>
    <property type="project" value="UniProtKB-KW"/>
</dbReference>
<dbReference type="GO" id="GO:0009146">
    <property type="term" value="P:purine nucleoside triphosphate catabolic process"/>
    <property type="evidence" value="ECO:0007669"/>
    <property type="project" value="UniProtKB-UniRule"/>
</dbReference>
<dbReference type="CDD" id="cd00515">
    <property type="entry name" value="HAM1"/>
    <property type="match status" value="1"/>
</dbReference>
<dbReference type="FunFam" id="3.90.950.10:FF:000001">
    <property type="entry name" value="dITP/XTP pyrophosphatase"/>
    <property type="match status" value="1"/>
</dbReference>
<dbReference type="Gene3D" id="3.90.950.10">
    <property type="match status" value="1"/>
</dbReference>
<dbReference type="HAMAP" id="MF_01405">
    <property type="entry name" value="Non_canon_purine_NTPase"/>
    <property type="match status" value="1"/>
</dbReference>
<dbReference type="InterPro" id="IPR020922">
    <property type="entry name" value="dITP/XTP_pyrophosphatase"/>
</dbReference>
<dbReference type="InterPro" id="IPR029001">
    <property type="entry name" value="ITPase-like_fam"/>
</dbReference>
<dbReference type="InterPro" id="IPR002637">
    <property type="entry name" value="RdgB/HAM1"/>
</dbReference>
<dbReference type="PANTHER" id="PTHR11067:SF9">
    <property type="entry name" value="INOSINE TRIPHOSPHATE PYROPHOSPHATASE"/>
    <property type="match status" value="1"/>
</dbReference>
<dbReference type="PANTHER" id="PTHR11067">
    <property type="entry name" value="INOSINE TRIPHOSPHATE PYROPHOSPHATASE/HAM1 PROTEIN"/>
    <property type="match status" value="1"/>
</dbReference>
<dbReference type="Pfam" id="PF01725">
    <property type="entry name" value="Ham1p_like"/>
    <property type="match status" value="1"/>
</dbReference>
<dbReference type="SUPFAM" id="SSF52972">
    <property type="entry name" value="ITPase-like"/>
    <property type="match status" value="1"/>
</dbReference>
<organism>
    <name type="scientific">Aliarcobacter butzleri (strain RM4018)</name>
    <name type="common">Arcobacter butzleri</name>
    <dbReference type="NCBI Taxonomy" id="367737"/>
    <lineage>
        <taxon>Bacteria</taxon>
        <taxon>Pseudomonadati</taxon>
        <taxon>Campylobacterota</taxon>
        <taxon>Epsilonproteobacteria</taxon>
        <taxon>Campylobacterales</taxon>
        <taxon>Arcobacteraceae</taxon>
        <taxon>Aliarcobacter</taxon>
    </lineage>
</organism>
<keyword id="KW-0378">Hydrolase</keyword>
<keyword id="KW-0460">Magnesium</keyword>
<keyword id="KW-0479">Metal-binding</keyword>
<keyword id="KW-0546">Nucleotide metabolism</keyword>
<keyword id="KW-0547">Nucleotide-binding</keyword>
<keyword id="KW-1185">Reference proteome</keyword>
<reference key="1">
    <citation type="journal article" date="2007" name="PLoS ONE">
        <title>The complete genome sequence and analysis of the Epsilonproteobacterium Arcobacter butzleri.</title>
        <authorList>
            <person name="Miller W.G."/>
            <person name="Parker C.T."/>
            <person name="Rubenfield M."/>
            <person name="Mendz G.L."/>
            <person name="Woesten M.M.S.M."/>
            <person name="Ussery D.W."/>
            <person name="Stolz J.F."/>
            <person name="Binnewies T.T."/>
            <person name="Hallin P.F."/>
            <person name="Wang G."/>
            <person name="Malek J.A."/>
            <person name="Rogosin A."/>
            <person name="Stanker L.H."/>
            <person name="Mandrell R.E."/>
        </authorList>
    </citation>
    <scope>NUCLEOTIDE SEQUENCE [LARGE SCALE GENOMIC DNA]</scope>
    <source>
        <strain>RM4018</strain>
    </source>
</reference>
<evidence type="ECO:0000255" key="1">
    <source>
        <dbReference type="HAMAP-Rule" id="MF_01405"/>
    </source>
</evidence>
<feature type="chain" id="PRO_1000068409" description="dITP/XTP pyrophosphatase">
    <location>
        <begin position="1"/>
        <end position="199"/>
    </location>
</feature>
<feature type="active site" description="Proton acceptor" evidence="1">
    <location>
        <position position="73"/>
    </location>
</feature>
<feature type="binding site" evidence="1">
    <location>
        <begin position="7"/>
        <end position="12"/>
    </location>
    <ligand>
        <name>substrate</name>
    </ligand>
</feature>
<feature type="binding site" evidence="1">
    <location>
        <position position="38"/>
    </location>
    <ligand>
        <name>Mg(2+)</name>
        <dbReference type="ChEBI" id="CHEBI:18420"/>
    </ligand>
</feature>
<feature type="binding site" evidence="1">
    <location>
        <position position="73"/>
    </location>
    <ligand>
        <name>Mg(2+)</name>
        <dbReference type="ChEBI" id="CHEBI:18420"/>
    </ligand>
</feature>
<feature type="binding site" evidence="1">
    <location>
        <position position="74"/>
    </location>
    <ligand>
        <name>substrate</name>
    </ligand>
</feature>
<feature type="binding site" evidence="1">
    <location>
        <begin position="155"/>
        <end position="158"/>
    </location>
    <ligand>
        <name>substrate</name>
    </ligand>
</feature>
<feature type="binding site" evidence="1">
    <location>
        <position position="178"/>
    </location>
    <ligand>
        <name>substrate</name>
    </ligand>
</feature>
<feature type="binding site" evidence="1">
    <location>
        <begin position="183"/>
        <end position="184"/>
    </location>
    <ligand>
        <name>substrate</name>
    </ligand>
</feature>